<gene>
    <name evidence="1" type="primary">htpX</name>
    <name type="ordered locus">SFV_1400</name>
</gene>
<feature type="chain" id="PRO_1000020944" description="Protease HtpX">
    <location>
        <begin position="1"/>
        <end position="293"/>
    </location>
</feature>
<feature type="transmembrane region" description="Helical" evidence="1">
    <location>
        <begin position="4"/>
        <end position="24"/>
    </location>
</feature>
<feature type="transmembrane region" description="Helical" evidence="1">
    <location>
        <begin position="34"/>
        <end position="54"/>
    </location>
</feature>
<feature type="transmembrane region" description="Helical" evidence="1">
    <location>
        <begin position="158"/>
        <end position="178"/>
    </location>
</feature>
<feature type="transmembrane region" description="Helical" evidence="1">
    <location>
        <begin position="193"/>
        <end position="213"/>
    </location>
</feature>
<feature type="active site" evidence="1">
    <location>
        <position position="140"/>
    </location>
</feature>
<feature type="binding site" evidence="1">
    <location>
        <position position="139"/>
    </location>
    <ligand>
        <name>Zn(2+)</name>
        <dbReference type="ChEBI" id="CHEBI:29105"/>
        <note>catalytic</note>
    </ligand>
</feature>
<feature type="binding site" evidence="1">
    <location>
        <position position="143"/>
    </location>
    <ligand>
        <name>Zn(2+)</name>
        <dbReference type="ChEBI" id="CHEBI:29105"/>
        <note>catalytic</note>
    </ligand>
</feature>
<feature type="binding site" evidence="1">
    <location>
        <position position="222"/>
    </location>
    <ligand>
        <name>Zn(2+)</name>
        <dbReference type="ChEBI" id="CHEBI:29105"/>
        <note>catalytic</note>
    </ligand>
</feature>
<reference key="1">
    <citation type="journal article" date="2006" name="BMC Genomics">
        <title>Complete genome sequence of Shigella flexneri 5b and comparison with Shigella flexneri 2a.</title>
        <authorList>
            <person name="Nie H."/>
            <person name="Yang F."/>
            <person name="Zhang X."/>
            <person name="Yang J."/>
            <person name="Chen L."/>
            <person name="Wang J."/>
            <person name="Xiong Z."/>
            <person name="Peng J."/>
            <person name="Sun L."/>
            <person name="Dong J."/>
            <person name="Xue Y."/>
            <person name="Xu X."/>
            <person name="Chen S."/>
            <person name="Yao Z."/>
            <person name="Shen Y."/>
            <person name="Jin Q."/>
        </authorList>
    </citation>
    <scope>NUCLEOTIDE SEQUENCE [LARGE SCALE GENOMIC DNA]</scope>
    <source>
        <strain>8401</strain>
    </source>
</reference>
<dbReference type="EC" id="3.4.24.-" evidence="1"/>
<dbReference type="EMBL" id="CP000266">
    <property type="protein sequence ID" value="ABF03593.1"/>
    <property type="molecule type" value="Genomic_DNA"/>
</dbReference>
<dbReference type="RefSeq" id="WP_000984517.1">
    <property type="nucleotide sequence ID" value="NC_008258.1"/>
</dbReference>
<dbReference type="SMR" id="Q0T522"/>
<dbReference type="MEROPS" id="M48.002"/>
<dbReference type="GeneID" id="93776079"/>
<dbReference type="KEGG" id="sfv:SFV_1400"/>
<dbReference type="HOGENOM" id="CLU_042266_1_0_6"/>
<dbReference type="Proteomes" id="UP000000659">
    <property type="component" value="Chromosome"/>
</dbReference>
<dbReference type="GO" id="GO:0005886">
    <property type="term" value="C:plasma membrane"/>
    <property type="evidence" value="ECO:0007669"/>
    <property type="project" value="UniProtKB-SubCell"/>
</dbReference>
<dbReference type="GO" id="GO:0004222">
    <property type="term" value="F:metalloendopeptidase activity"/>
    <property type="evidence" value="ECO:0007669"/>
    <property type="project" value="UniProtKB-UniRule"/>
</dbReference>
<dbReference type="GO" id="GO:0008270">
    <property type="term" value="F:zinc ion binding"/>
    <property type="evidence" value="ECO:0007669"/>
    <property type="project" value="UniProtKB-UniRule"/>
</dbReference>
<dbReference type="GO" id="GO:0006508">
    <property type="term" value="P:proteolysis"/>
    <property type="evidence" value="ECO:0007669"/>
    <property type="project" value="UniProtKB-KW"/>
</dbReference>
<dbReference type="CDD" id="cd07335">
    <property type="entry name" value="M48B_HtpX_like"/>
    <property type="match status" value="1"/>
</dbReference>
<dbReference type="FunFam" id="3.30.2010.10:FF:000001">
    <property type="entry name" value="Protease HtpX"/>
    <property type="match status" value="1"/>
</dbReference>
<dbReference type="Gene3D" id="3.30.2010.10">
    <property type="entry name" value="Metalloproteases ('zincins'), catalytic domain"/>
    <property type="match status" value="1"/>
</dbReference>
<dbReference type="HAMAP" id="MF_00188">
    <property type="entry name" value="Pept_M48_protease_HtpX"/>
    <property type="match status" value="1"/>
</dbReference>
<dbReference type="InterPro" id="IPR050083">
    <property type="entry name" value="HtpX_protease"/>
</dbReference>
<dbReference type="InterPro" id="IPR022919">
    <property type="entry name" value="Pept_M48_protease_HtpX"/>
</dbReference>
<dbReference type="InterPro" id="IPR001915">
    <property type="entry name" value="Peptidase_M48"/>
</dbReference>
<dbReference type="NCBIfam" id="NF003965">
    <property type="entry name" value="PRK05457.1"/>
    <property type="match status" value="1"/>
</dbReference>
<dbReference type="PANTHER" id="PTHR43221">
    <property type="entry name" value="PROTEASE HTPX"/>
    <property type="match status" value="1"/>
</dbReference>
<dbReference type="PANTHER" id="PTHR43221:SF1">
    <property type="entry name" value="PROTEASE HTPX"/>
    <property type="match status" value="1"/>
</dbReference>
<dbReference type="Pfam" id="PF01435">
    <property type="entry name" value="Peptidase_M48"/>
    <property type="match status" value="1"/>
</dbReference>
<keyword id="KW-0997">Cell inner membrane</keyword>
<keyword id="KW-1003">Cell membrane</keyword>
<keyword id="KW-0378">Hydrolase</keyword>
<keyword id="KW-0472">Membrane</keyword>
<keyword id="KW-0479">Metal-binding</keyword>
<keyword id="KW-0482">Metalloprotease</keyword>
<keyword id="KW-0645">Protease</keyword>
<keyword id="KW-0346">Stress response</keyword>
<keyword id="KW-0812">Transmembrane</keyword>
<keyword id="KW-1133">Transmembrane helix</keyword>
<keyword id="KW-0862">Zinc</keyword>
<sequence length="293" mass="31957">MMRIALFLLTNLAVMVVFGLVLSLTGIQSSSVQGLMIMALLFGFGGSFVSLLMSKWMALRSVGGEVIEQPRNERERWLVNTVATQARQAGIAMPQVAIYHAPDINAFATGARRDASLVAVSTGLLQNMSPDEAEAVIAHEISHIANGDMVTMTLIQGVVNTFVIFISRILAQLAAGFMGGNRDEGEESNGNPLIYFAVATVLELVFGILASIITMWFSRHREFHADAGSAKLVGREKMIAALQRLKTSYEPQEATSMMAFCINGKSKSLSELFMTHPPLDKRIEALRTGEYLK</sequence>
<organism>
    <name type="scientific">Shigella flexneri serotype 5b (strain 8401)</name>
    <dbReference type="NCBI Taxonomy" id="373384"/>
    <lineage>
        <taxon>Bacteria</taxon>
        <taxon>Pseudomonadati</taxon>
        <taxon>Pseudomonadota</taxon>
        <taxon>Gammaproteobacteria</taxon>
        <taxon>Enterobacterales</taxon>
        <taxon>Enterobacteriaceae</taxon>
        <taxon>Shigella</taxon>
    </lineage>
</organism>
<proteinExistence type="inferred from homology"/>
<evidence type="ECO:0000255" key="1">
    <source>
        <dbReference type="HAMAP-Rule" id="MF_00188"/>
    </source>
</evidence>
<accession>Q0T522</accession>
<name>HTPX_SHIF8</name>
<comment type="cofactor">
    <cofactor evidence="1">
        <name>Zn(2+)</name>
        <dbReference type="ChEBI" id="CHEBI:29105"/>
    </cofactor>
    <text evidence="1">Binds 1 zinc ion per subunit.</text>
</comment>
<comment type="subcellular location">
    <subcellularLocation>
        <location evidence="1">Cell inner membrane</location>
        <topology evidence="1">Multi-pass membrane protein</topology>
    </subcellularLocation>
</comment>
<comment type="similarity">
    <text evidence="1">Belongs to the peptidase M48B family.</text>
</comment>
<protein>
    <recommendedName>
        <fullName evidence="1">Protease HtpX</fullName>
        <ecNumber evidence="1">3.4.24.-</ecNumber>
    </recommendedName>
    <alternativeName>
        <fullName evidence="1">Heat shock protein HtpX</fullName>
    </alternativeName>
</protein>